<accession>Q8CTX6</accession>
<organism>
    <name type="scientific">Staphylococcus epidermidis (strain ATCC 12228 / FDA PCI 1200)</name>
    <dbReference type="NCBI Taxonomy" id="176280"/>
    <lineage>
        <taxon>Bacteria</taxon>
        <taxon>Bacillati</taxon>
        <taxon>Bacillota</taxon>
        <taxon>Bacilli</taxon>
        <taxon>Bacillales</taxon>
        <taxon>Staphylococcaceae</taxon>
        <taxon>Staphylococcus</taxon>
    </lineage>
</organism>
<protein>
    <recommendedName>
        <fullName>Formate acetyltransferase</fullName>
        <ecNumber evidence="1">2.3.1.54</ecNumber>
    </recommendedName>
    <alternativeName>
        <fullName>Pyruvate formate-lyase</fullName>
    </alternativeName>
</protein>
<feature type="chain" id="PRO_0000271729" description="Formate acetyltransferase">
    <location>
        <begin position="1"/>
        <end position="748"/>
    </location>
</feature>
<feature type="domain" description="PFL" evidence="4">
    <location>
        <begin position="5"/>
        <end position="618"/>
    </location>
</feature>
<feature type="domain" description="Glycine radical" evidence="3">
    <location>
        <begin position="625"/>
        <end position="748"/>
    </location>
</feature>
<feature type="active site" description="S-acetylcysteine intermediate" evidence="1">
    <location>
        <position position="412"/>
    </location>
</feature>
<feature type="active site" description="Cysteine radical intermediate" evidence="1">
    <location>
        <position position="413"/>
    </location>
</feature>
<feature type="modified residue" description="Glycine radical" evidence="3">
    <location>
        <position position="723"/>
    </location>
</feature>
<name>PFLB_STAES</name>
<gene>
    <name type="primary">pflB</name>
    <name type="ordered locus">SE_0214</name>
</gene>
<keyword id="KW-0012">Acyltransferase</keyword>
<keyword id="KW-0119">Carbohydrate metabolism</keyword>
<keyword id="KW-0963">Cytoplasm</keyword>
<keyword id="KW-0313">Glucose metabolism</keyword>
<keyword id="KW-0556">Organic radical</keyword>
<keyword id="KW-0808">Transferase</keyword>
<comment type="function">
    <text evidence="1">Catalyzes the conversion of pyruvate to formate and acetyl-CoA.</text>
</comment>
<comment type="catalytic activity">
    <reaction evidence="1">
        <text>formate + acetyl-CoA = pyruvate + CoA</text>
        <dbReference type="Rhea" id="RHEA:11844"/>
        <dbReference type="ChEBI" id="CHEBI:15361"/>
        <dbReference type="ChEBI" id="CHEBI:15740"/>
        <dbReference type="ChEBI" id="CHEBI:57287"/>
        <dbReference type="ChEBI" id="CHEBI:57288"/>
        <dbReference type="EC" id="2.3.1.54"/>
    </reaction>
</comment>
<comment type="pathway">
    <text>Fermentation; pyruvate fermentation; formate from pyruvate: step 1/1.</text>
</comment>
<comment type="subunit">
    <text evidence="1">Homodimer.</text>
</comment>
<comment type="subcellular location">
    <subcellularLocation>
        <location evidence="2">Cytoplasm</location>
    </subcellularLocation>
</comment>
<comment type="miscellaneous">
    <text evidence="1">Several mechanisms have been proposed based on complexes formed with substrate analogs. After activation by the glycine radical, the cysteine radical, Cys-413, can abstract hydrogen atoms from the other active site cysteine, Cys-412, and from coenzyme A, and it can also transfer hydrogen atoms to product radicals. The other active site cysteine can attack the central carbonyl of pyruvate and covalently bind the product acetyl group.</text>
</comment>
<comment type="similarity">
    <text evidence="5">Belongs to the glycyl radical enzyme (GRE) family. PFL subfamily.</text>
</comment>
<dbReference type="EC" id="2.3.1.54" evidence="1"/>
<dbReference type="EMBL" id="AE015929">
    <property type="protein sequence ID" value="AAO03811.1"/>
    <property type="molecule type" value="Genomic_DNA"/>
</dbReference>
<dbReference type="RefSeq" id="NP_763769.1">
    <property type="nucleotide sequence ID" value="NC_004461.1"/>
</dbReference>
<dbReference type="RefSeq" id="WP_002485526.1">
    <property type="nucleotide sequence ID" value="NC_004461.1"/>
</dbReference>
<dbReference type="SMR" id="Q8CTX6"/>
<dbReference type="KEGG" id="sep:SE_0214"/>
<dbReference type="PATRIC" id="fig|176280.10.peg.193"/>
<dbReference type="eggNOG" id="COG1882">
    <property type="taxonomic scope" value="Bacteria"/>
</dbReference>
<dbReference type="HOGENOM" id="CLU_023898_0_0_9"/>
<dbReference type="OrthoDB" id="9803969at2"/>
<dbReference type="UniPathway" id="UPA00920">
    <property type="reaction ID" value="UER00891"/>
</dbReference>
<dbReference type="Proteomes" id="UP000001411">
    <property type="component" value="Chromosome"/>
</dbReference>
<dbReference type="GO" id="GO:0005829">
    <property type="term" value="C:cytosol"/>
    <property type="evidence" value="ECO:0007669"/>
    <property type="project" value="TreeGrafter"/>
</dbReference>
<dbReference type="GO" id="GO:0008861">
    <property type="term" value="F:formate C-acetyltransferase activity"/>
    <property type="evidence" value="ECO:0007669"/>
    <property type="project" value="UniProtKB-EC"/>
</dbReference>
<dbReference type="GO" id="GO:0006006">
    <property type="term" value="P:glucose metabolic process"/>
    <property type="evidence" value="ECO:0007669"/>
    <property type="project" value="UniProtKB-KW"/>
</dbReference>
<dbReference type="CDD" id="cd01678">
    <property type="entry name" value="PFL1"/>
    <property type="match status" value="1"/>
</dbReference>
<dbReference type="FunFam" id="3.20.70.20:FF:000003">
    <property type="entry name" value="Formate acetyltransferase"/>
    <property type="match status" value="1"/>
</dbReference>
<dbReference type="Gene3D" id="3.20.70.20">
    <property type="match status" value="1"/>
</dbReference>
<dbReference type="InterPro" id="IPR050244">
    <property type="entry name" value="Auton_GlycylRad_Cofactor"/>
</dbReference>
<dbReference type="InterPro" id="IPR005949">
    <property type="entry name" value="Form_AcTrfase"/>
</dbReference>
<dbReference type="InterPro" id="IPR019777">
    <property type="entry name" value="Form_AcTrfase_GR_CS"/>
</dbReference>
<dbReference type="InterPro" id="IPR001150">
    <property type="entry name" value="Gly_radical"/>
</dbReference>
<dbReference type="InterPro" id="IPR004184">
    <property type="entry name" value="PFL_dom"/>
</dbReference>
<dbReference type="NCBIfam" id="TIGR01255">
    <property type="entry name" value="pyr_form_ly_1"/>
    <property type="match status" value="1"/>
</dbReference>
<dbReference type="PANTHER" id="PTHR30191">
    <property type="entry name" value="FORMATE ACETYLTRANSFERASE"/>
    <property type="match status" value="1"/>
</dbReference>
<dbReference type="PANTHER" id="PTHR30191:SF0">
    <property type="entry name" value="FORMATE ACETYLTRANSFERASE 1"/>
    <property type="match status" value="1"/>
</dbReference>
<dbReference type="Pfam" id="PF01228">
    <property type="entry name" value="Gly_radical"/>
    <property type="match status" value="1"/>
</dbReference>
<dbReference type="Pfam" id="PF02901">
    <property type="entry name" value="PFL-like"/>
    <property type="match status" value="1"/>
</dbReference>
<dbReference type="PIRSF" id="PIRSF000379">
    <property type="entry name" value="For_Ac_trans_1"/>
    <property type="match status" value="1"/>
</dbReference>
<dbReference type="SUPFAM" id="SSF51998">
    <property type="entry name" value="PFL-like glycyl radical enzymes"/>
    <property type="match status" value="1"/>
</dbReference>
<dbReference type="PROSITE" id="PS00850">
    <property type="entry name" value="GLY_RADICAL_1"/>
    <property type="match status" value="1"/>
</dbReference>
<dbReference type="PROSITE" id="PS51149">
    <property type="entry name" value="GLY_RADICAL_2"/>
    <property type="match status" value="1"/>
</dbReference>
<dbReference type="PROSITE" id="PS51554">
    <property type="entry name" value="PFL"/>
    <property type="match status" value="1"/>
</dbReference>
<evidence type="ECO:0000250" key="1">
    <source>
        <dbReference type="UniProtKB" id="P09373"/>
    </source>
</evidence>
<evidence type="ECO:0000250" key="2">
    <source>
        <dbReference type="UniProtKB" id="Q5HJF4"/>
    </source>
</evidence>
<evidence type="ECO:0000255" key="3">
    <source>
        <dbReference type="PROSITE-ProRule" id="PRU00493"/>
    </source>
</evidence>
<evidence type="ECO:0000255" key="4">
    <source>
        <dbReference type="PROSITE-ProRule" id="PRU00887"/>
    </source>
</evidence>
<evidence type="ECO:0000305" key="5"/>
<proteinExistence type="inferred from homology"/>
<sequence>MLETNNHTNAWQGFKTGRWNKNIDVREFIQLNYSLYEGDDEFLEGPTKATETLWDQVMQLSKEERERGGMWDMDTKVASTITSHDAGYLDKDLEKVVGVQTEKPFKRSMQPFGGIRMAKAACEAYGYELDPETEKIFTEYRKTHNQGVFDAYSREMLNCRKAGIITGLPDAYGRGRIIGDYRRVALYGVDFLMEQKLKDFNTMSTEMSEDVIRLREELTEQYRSLQDLKELGQKYGFDISRPATNFKEAVQWLYLAYLAAIKEQNGAAMSLGRTSTFLDIYAERDLQNGDITEQEVQEIIDHFIMKLRIVKFARTPEYNELFSGDPTWVTESIGGVGIDGRPMVTKNSFRFLHSLDNLGPAPEPNLTVLWSTRLPENFKIYCAKMSIKTSSIQYENDDLMRESYGDDYGIACCVSAMKIGKQMQFFGARANLAKALLYAINGGKDEKSGKQVGPSYEGIKSDVLDYDEVFERYEKMMDWLAGVYINSLNIIHYMHDKYSYERLEMALHDTEIIRTMATGIAGLSVAADSLSAIKYAQVKPIRNEEGLVTDFEIEGDFPKYGNNDSRVDEIAVDLVERFMTKLRSHKTYRNSEHTMSVLTITSNVVYGKKTGNTPDGRKAGEPFAPGANPMHGRDQKGALSSLSSVAKIPYDCCKDGISNTFSIVPKSLGKEEADQNKNLTSMLDGYAMQHGHHLNINVFNRETLIDAMEHPEEYPQLTIRVSGYAVNFIKLTREQQLDVISRTFHESM</sequence>
<reference key="1">
    <citation type="journal article" date="2003" name="Mol. Microbiol.">
        <title>Genome-based analysis of virulence genes in a non-biofilm-forming Staphylococcus epidermidis strain (ATCC 12228).</title>
        <authorList>
            <person name="Zhang Y.-Q."/>
            <person name="Ren S.-X."/>
            <person name="Li H.-L."/>
            <person name="Wang Y.-X."/>
            <person name="Fu G."/>
            <person name="Yang J."/>
            <person name="Qin Z.-Q."/>
            <person name="Miao Y.-G."/>
            <person name="Wang W.-Y."/>
            <person name="Chen R.-S."/>
            <person name="Shen Y."/>
            <person name="Chen Z."/>
            <person name="Yuan Z.-H."/>
            <person name="Zhao G.-P."/>
            <person name="Qu D."/>
            <person name="Danchin A."/>
            <person name="Wen Y.-M."/>
        </authorList>
    </citation>
    <scope>NUCLEOTIDE SEQUENCE [LARGE SCALE GENOMIC DNA]</scope>
    <source>
        <strain>ATCC 12228 / FDA PCI 1200</strain>
    </source>
</reference>